<dbReference type="EC" id="3.4.21.-"/>
<dbReference type="SMR" id="P0DJF5"/>
<dbReference type="GO" id="GO:0005576">
    <property type="term" value="C:extracellular region"/>
    <property type="evidence" value="ECO:0007669"/>
    <property type="project" value="UniProtKB-SubCell"/>
</dbReference>
<dbReference type="GO" id="GO:0030141">
    <property type="term" value="C:secretory granule"/>
    <property type="evidence" value="ECO:0007669"/>
    <property type="project" value="TreeGrafter"/>
</dbReference>
<dbReference type="GO" id="GO:0004252">
    <property type="term" value="F:serine-type endopeptidase activity"/>
    <property type="evidence" value="ECO:0007669"/>
    <property type="project" value="InterPro"/>
</dbReference>
<dbReference type="GO" id="GO:0090729">
    <property type="term" value="F:toxin activity"/>
    <property type="evidence" value="ECO:0007669"/>
    <property type="project" value="UniProtKB-KW"/>
</dbReference>
<dbReference type="GO" id="GO:0006508">
    <property type="term" value="P:proteolysis"/>
    <property type="evidence" value="ECO:0007669"/>
    <property type="project" value="UniProtKB-KW"/>
</dbReference>
<dbReference type="CDD" id="cd00190">
    <property type="entry name" value="Tryp_SPc"/>
    <property type="match status" value="1"/>
</dbReference>
<dbReference type="FunFam" id="2.40.10.10:FF:000158">
    <property type="entry name" value="Thrombin-like enzyme saxthrombin"/>
    <property type="match status" value="1"/>
</dbReference>
<dbReference type="FunFam" id="2.40.10.10:FF:000153">
    <property type="entry name" value="Venom plasminogen activator TSV-PA"/>
    <property type="match status" value="1"/>
</dbReference>
<dbReference type="Gene3D" id="2.40.10.10">
    <property type="entry name" value="Trypsin-like serine proteases"/>
    <property type="match status" value="2"/>
</dbReference>
<dbReference type="InterPro" id="IPR009003">
    <property type="entry name" value="Peptidase_S1_PA"/>
</dbReference>
<dbReference type="InterPro" id="IPR043504">
    <property type="entry name" value="Peptidase_S1_PA_chymotrypsin"/>
</dbReference>
<dbReference type="InterPro" id="IPR001314">
    <property type="entry name" value="Peptidase_S1A"/>
</dbReference>
<dbReference type="InterPro" id="IPR001254">
    <property type="entry name" value="Trypsin_dom"/>
</dbReference>
<dbReference type="InterPro" id="IPR018114">
    <property type="entry name" value="TRYPSIN_HIS"/>
</dbReference>
<dbReference type="PANTHER" id="PTHR24271:SF47">
    <property type="entry name" value="KALLIKREIN-1"/>
    <property type="match status" value="1"/>
</dbReference>
<dbReference type="PANTHER" id="PTHR24271">
    <property type="entry name" value="KALLIKREIN-RELATED"/>
    <property type="match status" value="1"/>
</dbReference>
<dbReference type="Pfam" id="PF00089">
    <property type="entry name" value="Trypsin"/>
    <property type="match status" value="1"/>
</dbReference>
<dbReference type="PRINTS" id="PR00722">
    <property type="entry name" value="CHYMOTRYPSIN"/>
</dbReference>
<dbReference type="SMART" id="SM00020">
    <property type="entry name" value="Tryp_SPc"/>
    <property type="match status" value="1"/>
</dbReference>
<dbReference type="SUPFAM" id="SSF50494">
    <property type="entry name" value="Trypsin-like serine proteases"/>
    <property type="match status" value="1"/>
</dbReference>
<dbReference type="PROSITE" id="PS50240">
    <property type="entry name" value="TRYPSIN_DOM"/>
    <property type="match status" value="1"/>
</dbReference>
<dbReference type="PROSITE" id="PS00134">
    <property type="entry name" value="TRYPSIN_HIS"/>
    <property type="match status" value="1"/>
</dbReference>
<name>VSPPA_TRIAB</name>
<reference key="1">
    <citation type="journal article" date="2006" name="Toxicon">
        <title>Molecular cloning of novel serine proteases and phospholipases A2 from green pit viper (Trimeresurus albolabris) venom gland cDNA library.</title>
        <authorList>
            <person name="Rojnuckarin P."/>
            <person name="Muanpasitporn C."/>
            <person name="Chanhome L."/>
            <person name="Arpijuntarangkoon J."/>
            <person name="Intragumtornchai T."/>
        </authorList>
    </citation>
    <scope>NUCLEOTIDE SEQUENCE [MRNA]</scope>
    <source>
        <tissue>Venom gland</tissue>
    </source>
</reference>
<sequence length="258" mass="28428">MVLIRVLANLLILQLSYAQKSSELVFGGRPCNINEHRSLVVLFNSSGFLCGGTLINQDWVVTAAHCDSNNFQLLFGVHSKKTLNEDEQTRDPKEKFFCPNRKKDDEVDKDIMLIKLDSSVNNSEHIAPLSLPSSPPSVGSVCRIMGWGKTIPTKDIYPDVPHCANINILDHAVCRTAYSWRQVANTTLCAGILQGGKDTCHFDSGGPLICNEQFHGIVSWGGHPCGQPREPGVYTNVFDYTDWIQSIIAGNKDATCPP</sequence>
<evidence type="ECO:0000250" key="1"/>
<evidence type="ECO:0000255" key="2"/>
<evidence type="ECO:0000255" key="3">
    <source>
        <dbReference type="PROSITE-ProRule" id="PRU00274"/>
    </source>
</evidence>
<proteinExistence type="evidence at transcript level"/>
<comment type="function">
    <text evidence="1">Snake venom serine protease that activates plasminogen.</text>
</comment>
<comment type="subunit">
    <text evidence="1">Monomer.</text>
</comment>
<comment type="subcellular location">
    <subcellularLocation>
        <location evidence="1">Secreted</location>
    </subcellularLocation>
</comment>
<comment type="tissue specificity">
    <text>Expressed by the venom gland.</text>
</comment>
<comment type="similarity">
    <text evidence="3">Belongs to the peptidase S1 family. Snake venom subfamily.</text>
</comment>
<accession>P0DJF5</accession>
<protein>
    <recommendedName>
        <fullName>Venom plasminogen activator GPV-PA</fullName>
        <ecNumber>3.4.21.-</ecNumber>
    </recommendedName>
    <alternativeName>
        <fullName>Green pit viper plasminogen activator</fullName>
        <shortName>GPV-PA</shortName>
    </alternativeName>
    <alternativeName>
        <fullName>Snake venom serine protease</fullName>
        <shortName>SVSP</shortName>
    </alternativeName>
</protein>
<keyword id="KW-1015">Disulfide bond</keyword>
<keyword id="KW-1205">Fibrinolytic toxin</keyword>
<keyword id="KW-0325">Glycoprotein</keyword>
<keyword id="KW-1199">Hemostasis impairing toxin</keyword>
<keyword id="KW-0378">Hydrolase</keyword>
<keyword id="KW-0617">Plasminogen activation</keyword>
<keyword id="KW-0645">Protease</keyword>
<keyword id="KW-0964">Secreted</keyword>
<keyword id="KW-0720">Serine protease</keyword>
<keyword id="KW-0732">Signal</keyword>
<keyword id="KW-0800">Toxin</keyword>
<keyword id="KW-0865">Zymogen</keyword>
<feature type="signal peptide" evidence="1">
    <location>
        <begin position="1"/>
        <end position="18"/>
    </location>
</feature>
<feature type="propeptide" id="PRO_0000416392" evidence="1">
    <location>
        <begin position="19"/>
        <end position="24"/>
    </location>
</feature>
<feature type="chain" id="PRO_0000416393" description="Venom plasminogen activator GPV-PA">
    <location>
        <begin position="25"/>
        <end position="258"/>
    </location>
</feature>
<feature type="domain" description="Peptidase S1" evidence="3">
    <location>
        <begin position="25"/>
        <end position="249"/>
    </location>
</feature>
<feature type="active site" description="Charge relay system" evidence="1">
    <location>
        <position position="65"/>
    </location>
</feature>
<feature type="active site" description="Charge relay system" evidence="1">
    <location>
        <position position="110"/>
    </location>
</feature>
<feature type="active site" description="Charge relay system" evidence="1">
    <location>
        <position position="204"/>
    </location>
</feature>
<feature type="glycosylation site" description="N-linked (GlcNAc...) asparagine" evidence="2">
    <location>
        <position position="44"/>
    </location>
</feature>
<feature type="glycosylation site" description="N-linked (GlcNAc...) asparagine" evidence="2">
    <location>
        <position position="121"/>
    </location>
</feature>
<feature type="glycosylation site" description="N-linked (GlcNAc...) asparagine" evidence="2">
    <location>
        <position position="185"/>
    </location>
</feature>
<feature type="disulfide bond" evidence="3">
    <location>
        <begin position="31"/>
        <end position="163"/>
    </location>
</feature>
<feature type="disulfide bond" evidence="3">
    <location>
        <begin position="50"/>
        <end position="66"/>
    </location>
</feature>
<feature type="disulfide bond" evidence="3">
    <location>
        <begin position="98"/>
        <end position="256"/>
    </location>
</feature>
<feature type="disulfide bond" evidence="3">
    <location>
        <begin position="142"/>
        <end position="210"/>
    </location>
</feature>
<feature type="disulfide bond" evidence="3">
    <location>
        <begin position="174"/>
        <end position="189"/>
    </location>
</feature>
<feature type="disulfide bond" evidence="3">
    <location>
        <begin position="200"/>
        <end position="225"/>
    </location>
</feature>
<organism>
    <name type="scientific">Trimeresurus albolabris</name>
    <name type="common">White-lipped pit viper</name>
    <name type="synonym">Cryptelytrops albolabris</name>
    <dbReference type="NCBI Taxonomy" id="8765"/>
    <lineage>
        <taxon>Eukaryota</taxon>
        <taxon>Metazoa</taxon>
        <taxon>Chordata</taxon>
        <taxon>Craniata</taxon>
        <taxon>Vertebrata</taxon>
        <taxon>Euteleostomi</taxon>
        <taxon>Lepidosauria</taxon>
        <taxon>Squamata</taxon>
        <taxon>Bifurcata</taxon>
        <taxon>Unidentata</taxon>
        <taxon>Episquamata</taxon>
        <taxon>Toxicofera</taxon>
        <taxon>Serpentes</taxon>
        <taxon>Colubroidea</taxon>
        <taxon>Viperidae</taxon>
        <taxon>Crotalinae</taxon>
        <taxon>Trimeresurus</taxon>
    </lineage>
</organism>